<name>PDS5C_ARATH</name>
<comment type="function">
    <text evidence="1 4">Cohesin cofactor dispensable during the meiotic division but playing an important role in DNA repair by homologous recombination (HR) probably by helping SMC5/SMC6 complex (PubMed:26648949). Regulator of sister chromatid cohesion in mitosis which may stabilize cohesin complex association with chromatin (PubMed:26648949). May couple sister chromatid cohesion during mitosis to DNA replication (By similarity). Cohesion ensures that chromosome partitioning is accurate in both meiotic and mitotic cells and plays an important role in DNA repair (PubMed:26648949).</text>
</comment>
<comment type="subunit">
    <text evidence="1">Interacts with the cohesin complex.</text>
</comment>
<comment type="subcellular location">
    <subcellularLocation>
        <location evidence="1">Nucleus</location>
    </subcellularLocation>
</comment>
<comment type="disruption phenotype">
    <text evidence="4">Weak impact on meiosis such as formation of some chromosome bridges at late anaphase I and telophase I in forming pollen, but severe effects on development, fertility, somatic homologous recombination (HR) and DNA repair, especially in plants lacking PDS5A, PDS5B, PDS5C, PDS5D and PDS5E.</text>
</comment>
<comment type="similarity">
    <text evidence="6">Belongs to the PDS5 family.</text>
</comment>
<comment type="sequence caution" evidence="6">
    <conflict type="erroneous gene model prediction">
        <sequence resource="EMBL-CDS" id="CAB40758"/>
    </conflict>
</comment>
<comment type="sequence caution" evidence="6">
    <conflict type="erroneous gene model prediction">
        <sequence resource="EMBL-CDS" id="CAB79906"/>
    </conflict>
</comment>
<keyword id="KW-0002">3D-structure</keyword>
<keyword id="KW-0131">Cell cycle</keyword>
<keyword id="KW-0132">Cell division</keyword>
<keyword id="KW-0227">DNA damage</keyword>
<keyword id="KW-0234">DNA repair</keyword>
<keyword id="KW-0498">Mitosis</keyword>
<keyword id="KW-0539">Nucleus</keyword>
<keyword id="KW-0597">Phosphoprotein</keyword>
<keyword id="KW-1185">Reference proteome</keyword>
<keyword id="KW-0677">Repeat</keyword>
<feature type="chain" id="PRO_0000453277" description="Sister chromatid cohesion protein PDS5 homolog C">
    <location>
        <begin position="1"/>
        <end position="873"/>
    </location>
</feature>
<feature type="repeat" description="HEAT 1" evidence="2">
    <location>
        <begin position="53"/>
        <end position="92"/>
    </location>
</feature>
<feature type="repeat" description="HEAT 2" evidence="2">
    <location>
        <begin position="99"/>
        <end position="136"/>
    </location>
</feature>
<feature type="repeat" description="HEAT 3" evidence="2">
    <location>
        <begin position="149"/>
        <end position="187"/>
    </location>
</feature>
<feature type="repeat" description="HEAT 4" evidence="2">
    <location>
        <begin position="189"/>
        <end position="227"/>
    </location>
</feature>
<feature type="region of interest" description="Disordered" evidence="3">
    <location>
        <begin position="266"/>
        <end position="611"/>
    </location>
</feature>
<feature type="region of interest" description="Disordered" evidence="3">
    <location>
        <begin position="658"/>
        <end position="873"/>
    </location>
</feature>
<feature type="compositionally biased region" description="Basic and acidic residues" evidence="3">
    <location>
        <begin position="266"/>
        <end position="301"/>
    </location>
</feature>
<feature type="compositionally biased region" description="Polar residues" evidence="3">
    <location>
        <begin position="303"/>
        <end position="319"/>
    </location>
</feature>
<feature type="compositionally biased region" description="Basic and acidic residues" evidence="3">
    <location>
        <begin position="320"/>
        <end position="334"/>
    </location>
</feature>
<feature type="compositionally biased region" description="Polar residues" evidence="3">
    <location>
        <begin position="336"/>
        <end position="348"/>
    </location>
</feature>
<feature type="compositionally biased region" description="Basic and acidic residues" evidence="3">
    <location>
        <begin position="349"/>
        <end position="365"/>
    </location>
</feature>
<feature type="compositionally biased region" description="Basic and acidic residues" evidence="3">
    <location>
        <begin position="373"/>
        <end position="394"/>
    </location>
</feature>
<feature type="compositionally biased region" description="Polar residues" evidence="3">
    <location>
        <begin position="400"/>
        <end position="411"/>
    </location>
</feature>
<feature type="compositionally biased region" description="Polar residues" evidence="3">
    <location>
        <begin position="418"/>
        <end position="438"/>
    </location>
</feature>
<feature type="compositionally biased region" description="Basic and acidic residues" evidence="3">
    <location>
        <begin position="456"/>
        <end position="466"/>
    </location>
</feature>
<feature type="compositionally biased region" description="Low complexity" evidence="3">
    <location>
        <begin position="494"/>
        <end position="510"/>
    </location>
</feature>
<feature type="compositionally biased region" description="Basic and acidic residues" evidence="3">
    <location>
        <begin position="511"/>
        <end position="526"/>
    </location>
</feature>
<feature type="compositionally biased region" description="Basic and acidic residues" evidence="3">
    <location>
        <begin position="535"/>
        <end position="555"/>
    </location>
</feature>
<feature type="compositionally biased region" description="Acidic residues" evidence="3">
    <location>
        <begin position="661"/>
        <end position="681"/>
    </location>
</feature>
<feature type="compositionally biased region" description="Low complexity" evidence="3">
    <location>
        <begin position="701"/>
        <end position="725"/>
    </location>
</feature>
<feature type="compositionally biased region" description="Basic and acidic residues" evidence="3">
    <location>
        <begin position="726"/>
        <end position="746"/>
    </location>
</feature>
<feature type="compositionally biased region" description="Acidic residues" evidence="3">
    <location>
        <begin position="747"/>
        <end position="757"/>
    </location>
</feature>
<feature type="compositionally biased region" description="Low complexity" evidence="3">
    <location>
        <begin position="795"/>
        <end position="814"/>
    </location>
</feature>
<feature type="compositionally biased region" description="Low complexity" evidence="3">
    <location>
        <begin position="822"/>
        <end position="831"/>
    </location>
</feature>
<feature type="compositionally biased region" description="Basic and acidic residues" evidence="3">
    <location>
        <begin position="844"/>
        <end position="853"/>
    </location>
</feature>
<feature type="compositionally biased region" description="Low complexity" evidence="3">
    <location>
        <begin position="854"/>
        <end position="866"/>
    </location>
</feature>
<feature type="modified residue" description="Phosphothreonine" evidence="9 10">
    <location>
        <position position="289"/>
    </location>
</feature>
<feature type="helix" evidence="11">
    <location>
        <begin position="606"/>
        <end position="608"/>
    </location>
</feature>
<feature type="strand" evidence="11">
    <location>
        <begin position="612"/>
        <end position="617"/>
    </location>
</feature>
<feature type="turn" evidence="11">
    <location>
        <begin position="618"/>
        <end position="621"/>
    </location>
</feature>
<feature type="strand" evidence="11">
    <location>
        <begin position="622"/>
        <end position="632"/>
    </location>
</feature>
<feature type="turn" evidence="11">
    <location>
        <begin position="633"/>
        <end position="636"/>
    </location>
</feature>
<feature type="strand" evidence="11">
    <location>
        <begin position="637"/>
        <end position="642"/>
    </location>
</feature>
<feature type="strand" evidence="11">
    <location>
        <begin position="647"/>
        <end position="650"/>
    </location>
</feature>
<feature type="helix" evidence="11">
    <location>
        <begin position="652"/>
        <end position="654"/>
    </location>
</feature>
<feature type="strand" evidence="11">
    <location>
        <begin position="657"/>
        <end position="659"/>
    </location>
</feature>
<accession>Q8GUP3</accession>
<accession>Q8VZU8</accession>
<accession>Q9SZ55</accession>
<organism>
    <name type="scientific">Arabidopsis thaliana</name>
    <name type="common">Mouse-ear cress</name>
    <dbReference type="NCBI Taxonomy" id="3702"/>
    <lineage>
        <taxon>Eukaryota</taxon>
        <taxon>Viridiplantae</taxon>
        <taxon>Streptophyta</taxon>
        <taxon>Embryophyta</taxon>
        <taxon>Tracheophyta</taxon>
        <taxon>Spermatophyta</taxon>
        <taxon>Magnoliopsida</taxon>
        <taxon>eudicotyledons</taxon>
        <taxon>Gunneridae</taxon>
        <taxon>Pentapetalae</taxon>
        <taxon>rosids</taxon>
        <taxon>malvids</taxon>
        <taxon>Brassicales</taxon>
        <taxon>Brassicaceae</taxon>
        <taxon>Camelineae</taxon>
        <taxon>Arabidopsis</taxon>
    </lineage>
</organism>
<protein>
    <recommendedName>
        <fullName evidence="6">Sister chromatid cohesion protein PDS5 homolog C</fullName>
    </recommendedName>
    <alternativeName>
        <fullName evidence="6">Precocious dissociation of sisters protein 5-C</fullName>
        <shortName evidence="5">AtPDS5C</shortName>
    </alternativeName>
</protein>
<gene>
    <name evidence="5" type="primary">PDS5C</name>
    <name evidence="7" type="ordered locus">At4g31880</name>
    <name evidence="8" type="ORF">F11C18.80</name>
</gene>
<sequence length="873" mass="94209">MSDSDKELENQIIEAGEKLIDPPSSLDELLSFLDKLFVSLAEVEQSPPDSMQNALTPLMKGLVGGKLFKHSDVDVKVAVAACISEITRITAPDAPYDDDQMKEVFKLIVSSFEDLVDKSSRSYAKRISILETVAKVRSCVVMLDLECDALLIEMFQHFLKAIRDHHSGNVFSSMENIMTLVLEESEDIPSEMLSPILHSVKKDDEISQVSRRLAEQVLSNCASKLKTYLTEAVKSSGVPLDKYSNIVASICEGTFSALQQDQVVANEKEDSQGHIKRETEVEKAAEISTPERTDAPKDESGKSGVSNGVAQQNDSSVDTDSMKKQDDTGAKDEPQQLDNPRNTDLNNTTEEKPDVEHQIEEKENESSSVKQADLSKDSDIKEETEPAELLDSKDVLTSPPVDSSVTAATSSENEKNKSVQILPSKTSGDETANVSSPSMAEELPEQSVPKKTANQKKKESSTEEVKPSASIATEEVSEEPNTSEPQVTKKSGKKVASSSKTKPTVPPSKKSTSETKVAKQSEKKVVGSDNAQESTKPKEEKKKPGRGKAIDEESLHTSSGDNEKPAVSSGKLASKSKKEAKQTVEESPNSNTKRKRSLGQGKASGESLVGSRIKVWWPMDQAYYKGVVESYDAAKKKHLVIYDDGDQEILYLKNQKWSPLDESELSQDEEAADQTGQEEDASTVPLTKKAKTGKQSKMDNSSAKKGSGAGSSKAKATPASKSSKTSQDDKTASKSKDSKEASREEEASSEEESEEEEPPKTVGKSGSSRSKKDISSVSKSGKSKASSKKKEEPSKATTSSKSKSGPVKSVPAKSKTGKGKAKSGSASTPASKAKESASESESEETPKEPEPATKAKSGKSQGSQSKSGKKRKR</sequence>
<evidence type="ECO:0000250" key="1">
    <source>
        <dbReference type="UniProtKB" id="Q29RF7"/>
    </source>
</evidence>
<evidence type="ECO:0000255" key="2"/>
<evidence type="ECO:0000256" key="3">
    <source>
        <dbReference type="SAM" id="MobiDB-lite"/>
    </source>
</evidence>
<evidence type="ECO:0000269" key="4">
    <source>
    </source>
</evidence>
<evidence type="ECO:0000303" key="5">
    <source>
    </source>
</evidence>
<evidence type="ECO:0000305" key="6"/>
<evidence type="ECO:0000312" key="7">
    <source>
        <dbReference type="Araport" id="AT4G31880"/>
    </source>
</evidence>
<evidence type="ECO:0000312" key="8">
    <source>
        <dbReference type="EMBL" id="CAB40758.1"/>
    </source>
</evidence>
<evidence type="ECO:0007744" key="9">
    <source>
    </source>
</evidence>
<evidence type="ECO:0007744" key="10">
    <source>
    </source>
</evidence>
<evidence type="ECO:0007829" key="11">
    <source>
        <dbReference type="PDB" id="7DE9"/>
    </source>
</evidence>
<reference key="1">
    <citation type="journal article" date="1999" name="Nature">
        <title>Sequence and analysis of chromosome 4 of the plant Arabidopsis thaliana.</title>
        <authorList>
            <person name="Mayer K.F.X."/>
            <person name="Schueller C."/>
            <person name="Wambutt R."/>
            <person name="Murphy G."/>
            <person name="Volckaert G."/>
            <person name="Pohl T."/>
            <person name="Duesterhoeft A."/>
            <person name="Stiekema W."/>
            <person name="Entian K.-D."/>
            <person name="Terryn N."/>
            <person name="Harris B."/>
            <person name="Ansorge W."/>
            <person name="Brandt P."/>
            <person name="Grivell L.A."/>
            <person name="Rieger M."/>
            <person name="Weichselgartner M."/>
            <person name="de Simone V."/>
            <person name="Obermaier B."/>
            <person name="Mache R."/>
            <person name="Mueller M."/>
            <person name="Kreis M."/>
            <person name="Delseny M."/>
            <person name="Puigdomenech P."/>
            <person name="Watson M."/>
            <person name="Schmidtheini T."/>
            <person name="Reichert B."/>
            <person name="Portetelle D."/>
            <person name="Perez-Alonso M."/>
            <person name="Boutry M."/>
            <person name="Bancroft I."/>
            <person name="Vos P."/>
            <person name="Hoheisel J."/>
            <person name="Zimmermann W."/>
            <person name="Wedler H."/>
            <person name="Ridley P."/>
            <person name="Langham S.-A."/>
            <person name="McCullagh B."/>
            <person name="Bilham L."/>
            <person name="Robben J."/>
            <person name="van der Schueren J."/>
            <person name="Grymonprez B."/>
            <person name="Chuang Y.-J."/>
            <person name="Vandenbussche F."/>
            <person name="Braeken M."/>
            <person name="Weltjens I."/>
            <person name="Voet M."/>
            <person name="Bastiaens I."/>
            <person name="Aert R."/>
            <person name="Defoor E."/>
            <person name="Weitzenegger T."/>
            <person name="Bothe G."/>
            <person name="Ramsperger U."/>
            <person name="Hilbert H."/>
            <person name="Braun M."/>
            <person name="Holzer E."/>
            <person name="Brandt A."/>
            <person name="Peters S."/>
            <person name="van Staveren M."/>
            <person name="Dirkse W."/>
            <person name="Mooijman P."/>
            <person name="Klein Lankhorst R."/>
            <person name="Rose M."/>
            <person name="Hauf J."/>
            <person name="Koetter P."/>
            <person name="Berneiser S."/>
            <person name="Hempel S."/>
            <person name="Feldpausch M."/>
            <person name="Lamberth S."/>
            <person name="Van den Daele H."/>
            <person name="De Keyser A."/>
            <person name="Buysshaert C."/>
            <person name="Gielen J."/>
            <person name="Villarroel R."/>
            <person name="De Clercq R."/>
            <person name="van Montagu M."/>
            <person name="Rogers J."/>
            <person name="Cronin A."/>
            <person name="Quail M.A."/>
            <person name="Bray-Allen S."/>
            <person name="Clark L."/>
            <person name="Doggett J."/>
            <person name="Hall S."/>
            <person name="Kay M."/>
            <person name="Lennard N."/>
            <person name="McLay K."/>
            <person name="Mayes R."/>
            <person name="Pettett A."/>
            <person name="Rajandream M.A."/>
            <person name="Lyne M."/>
            <person name="Benes V."/>
            <person name="Rechmann S."/>
            <person name="Borkova D."/>
            <person name="Bloecker H."/>
            <person name="Scharfe M."/>
            <person name="Grimm M."/>
            <person name="Loehnert T.-H."/>
            <person name="Dose S."/>
            <person name="de Haan M."/>
            <person name="Maarse A.C."/>
            <person name="Schaefer M."/>
            <person name="Mueller-Auer S."/>
            <person name="Gabel C."/>
            <person name="Fuchs M."/>
            <person name="Fartmann B."/>
            <person name="Granderath K."/>
            <person name="Dauner D."/>
            <person name="Herzl A."/>
            <person name="Neumann S."/>
            <person name="Argiriou A."/>
            <person name="Vitale D."/>
            <person name="Liguori R."/>
            <person name="Piravandi E."/>
            <person name="Massenet O."/>
            <person name="Quigley F."/>
            <person name="Clabauld G."/>
            <person name="Muendlein A."/>
            <person name="Felber R."/>
            <person name="Schnabl S."/>
            <person name="Hiller R."/>
            <person name="Schmidt W."/>
            <person name="Lecharny A."/>
            <person name="Aubourg S."/>
            <person name="Chefdor F."/>
            <person name="Cooke R."/>
            <person name="Berger C."/>
            <person name="Monfort A."/>
            <person name="Casacuberta E."/>
            <person name="Gibbons T."/>
            <person name="Weber N."/>
            <person name="Vandenbol M."/>
            <person name="Bargues M."/>
            <person name="Terol J."/>
            <person name="Torres A."/>
            <person name="Perez-Perez A."/>
            <person name="Purnelle B."/>
            <person name="Bent E."/>
            <person name="Johnson S."/>
            <person name="Tacon D."/>
            <person name="Jesse T."/>
            <person name="Heijnen L."/>
            <person name="Schwarz S."/>
            <person name="Scholler P."/>
            <person name="Heber S."/>
            <person name="Francs P."/>
            <person name="Bielke C."/>
            <person name="Frishman D."/>
            <person name="Haase D."/>
            <person name="Lemcke K."/>
            <person name="Mewes H.-W."/>
            <person name="Stocker S."/>
            <person name="Zaccaria P."/>
            <person name="Bevan M."/>
            <person name="Wilson R.K."/>
            <person name="de la Bastide M."/>
            <person name="Habermann K."/>
            <person name="Parnell L."/>
            <person name="Dedhia N."/>
            <person name="Gnoj L."/>
            <person name="Schutz K."/>
            <person name="Huang E."/>
            <person name="Spiegel L."/>
            <person name="Sekhon M."/>
            <person name="Murray J."/>
            <person name="Sheet P."/>
            <person name="Cordes M."/>
            <person name="Abu-Threideh J."/>
            <person name="Stoneking T."/>
            <person name="Kalicki J."/>
            <person name="Graves T."/>
            <person name="Harmon G."/>
            <person name="Edwards J."/>
            <person name="Latreille P."/>
            <person name="Courtney L."/>
            <person name="Cloud J."/>
            <person name="Abbott A."/>
            <person name="Scott K."/>
            <person name="Johnson D."/>
            <person name="Minx P."/>
            <person name="Bentley D."/>
            <person name="Fulton B."/>
            <person name="Miller N."/>
            <person name="Greco T."/>
            <person name="Kemp K."/>
            <person name="Kramer J."/>
            <person name="Fulton L."/>
            <person name="Mardis E."/>
            <person name="Dante M."/>
            <person name="Pepin K."/>
            <person name="Hillier L.W."/>
            <person name="Nelson J."/>
            <person name="Spieth J."/>
            <person name="Ryan E."/>
            <person name="Andrews S."/>
            <person name="Geisel C."/>
            <person name="Layman D."/>
            <person name="Du H."/>
            <person name="Ali J."/>
            <person name="Berghoff A."/>
            <person name="Jones K."/>
            <person name="Drone K."/>
            <person name="Cotton M."/>
            <person name="Joshu C."/>
            <person name="Antonoiu B."/>
            <person name="Zidanic M."/>
            <person name="Strong C."/>
            <person name="Sun H."/>
            <person name="Lamar B."/>
            <person name="Yordan C."/>
            <person name="Ma P."/>
            <person name="Zhong J."/>
            <person name="Preston R."/>
            <person name="Vil D."/>
            <person name="Shekher M."/>
            <person name="Matero A."/>
            <person name="Shah R."/>
            <person name="Swaby I.K."/>
            <person name="O'Shaughnessy A."/>
            <person name="Rodriguez M."/>
            <person name="Hoffman J."/>
            <person name="Till S."/>
            <person name="Granat S."/>
            <person name="Shohdy N."/>
            <person name="Hasegawa A."/>
            <person name="Hameed A."/>
            <person name="Lodhi M."/>
            <person name="Johnson A."/>
            <person name="Chen E."/>
            <person name="Marra M.A."/>
            <person name="Martienssen R."/>
            <person name="McCombie W.R."/>
        </authorList>
    </citation>
    <scope>NUCLEOTIDE SEQUENCE [LARGE SCALE GENOMIC DNA]</scope>
    <source>
        <strain>cv. Columbia</strain>
    </source>
</reference>
<reference key="2">
    <citation type="journal article" date="2017" name="Plant J.">
        <title>Araport11: a complete reannotation of the Arabidopsis thaliana reference genome.</title>
        <authorList>
            <person name="Cheng C.Y."/>
            <person name="Krishnakumar V."/>
            <person name="Chan A.P."/>
            <person name="Thibaud-Nissen F."/>
            <person name="Schobel S."/>
            <person name="Town C.D."/>
        </authorList>
    </citation>
    <scope>GENOME REANNOTATION</scope>
    <source>
        <strain>cv. Columbia</strain>
    </source>
</reference>
<reference key="3">
    <citation type="journal article" date="2003" name="Science">
        <title>Empirical analysis of transcriptional activity in the Arabidopsis genome.</title>
        <authorList>
            <person name="Yamada K."/>
            <person name="Lim J."/>
            <person name="Dale J.M."/>
            <person name="Chen H."/>
            <person name="Shinn P."/>
            <person name="Palm C.J."/>
            <person name="Southwick A.M."/>
            <person name="Wu H.C."/>
            <person name="Kim C.J."/>
            <person name="Nguyen M."/>
            <person name="Pham P.K."/>
            <person name="Cheuk R.F."/>
            <person name="Karlin-Newmann G."/>
            <person name="Liu S.X."/>
            <person name="Lam B."/>
            <person name="Sakano H."/>
            <person name="Wu T."/>
            <person name="Yu G."/>
            <person name="Miranda M."/>
            <person name="Quach H.L."/>
            <person name="Tripp M."/>
            <person name="Chang C.H."/>
            <person name="Lee J.M."/>
            <person name="Toriumi M.J."/>
            <person name="Chan M.M."/>
            <person name="Tang C.C."/>
            <person name="Onodera C.S."/>
            <person name="Deng J.M."/>
            <person name="Akiyama K."/>
            <person name="Ansari Y."/>
            <person name="Arakawa T."/>
            <person name="Banh J."/>
            <person name="Banno F."/>
            <person name="Bowser L."/>
            <person name="Brooks S.Y."/>
            <person name="Carninci P."/>
            <person name="Chao Q."/>
            <person name="Choy N."/>
            <person name="Enju A."/>
            <person name="Goldsmith A.D."/>
            <person name="Gurjal M."/>
            <person name="Hansen N.F."/>
            <person name="Hayashizaki Y."/>
            <person name="Johnson-Hopson C."/>
            <person name="Hsuan V.W."/>
            <person name="Iida K."/>
            <person name="Karnes M."/>
            <person name="Khan S."/>
            <person name="Koesema E."/>
            <person name="Ishida J."/>
            <person name="Jiang P.X."/>
            <person name="Jones T."/>
            <person name="Kawai J."/>
            <person name="Kamiya A."/>
            <person name="Meyers C."/>
            <person name="Nakajima M."/>
            <person name="Narusaka M."/>
            <person name="Seki M."/>
            <person name="Sakurai T."/>
            <person name="Satou M."/>
            <person name="Tamse R."/>
            <person name="Vaysberg M."/>
            <person name="Wallender E.K."/>
            <person name="Wong C."/>
            <person name="Yamamura Y."/>
            <person name="Yuan S."/>
            <person name="Shinozaki K."/>
            <person name="Davis R.W."/>
            <person name="Theologis A."/>
            <person name="Ecker J.R."/>
        </authorList>
    </citation>
    <scope>NUCLEOTIDE SEQUENCE [LARGE SCALE MRNA]</scope>
    <source>
        <strain>cv. Columbia</strain>
    </source>
</reference>
<reference key="4">
    <citation type="journal article" date="2008" name="J. Proteome Res.">
        <title>Site-specific phosphorylation profiling of Arabidopsis proteins by mass spectrometry and peptide chip analysis.</title>
        <authorList>
            <person name="de la Fuente van Bentem S."/>
            <person name="Anrather D."/>
            <person name="Dohnal I."/>
            <person name="Roitinger E."/>
            <person name="Csaszar E."/>
            <person name="Joore J."/>
            <person name="Buijnink J."/>
            <person name="Carreri A."/>
            <person name="Forzani C."/>
            <person name="Lorkovic Z.J."/>
            <person name="Barta A."/>
            <person name="Lecourieux D."/>
            <person name="Verhounig A."/>
            <person name="Jonak C."/>
            <person name="Hirt H."/>
        </authorList>
    </citation>
    <scope>PHOSPHORYLATION [LARGE SCALE ANALYSIS] AT THR-289</scope>
    <scope>IDENTIFICATION BY MASS SPECTROMETRY [LARGE SCALE ANALYSIS]</scope>
</reference>
<reference key="5">
    <citation type="journal article" date="2009" name="J. Proteomics">
        <title>Phosphoproteomic analysis of nuclei-enriched fractions from Arabidopsis thaliana.</title>
        <authorList>
            <person name="Jones A.M.E."/>
            <person name="MacLean D."/>
            <person name="Studholme D.J."/>
            <person name="Serna-Sanz A."/>
            <person name="Andreasson E."/>
            <person name="Rathjen J.P."/>
            <person name="Peck S.C."/>
        </authorList>
    </citation>
    <scope>PHOSPHORYLATION [LARGE SCALE ANALYSIS] AT THR-289</scope>
    <scope>IDENTIFICATION BY MASS SPECTROMETRY [LARGE SCALE ANALYSIS]</scope>
</reference>
<reference key="6">
    <citation type="journal article" date="2009" name="Plant Physiol.">
        <title>Large-scale Arabidopsis phosphoproteome profiling reveals novel chloroplast kinase substrates and phosphorylation networks.</title>
        <authorList>
            <person name="Reiland S."/>
            <person name="Messerli G."/>
            <person name="Baerenfaller K."/>
            <person name="Gerrits B."/>
            <person name="Endler A."/>
            <person name="Grossmann J."/>
            <person name="Gruissem W."/>
            <person name="Baginsky S."/>
        </authorList>
    </citation>
    <scope>IDENTIFICATION BY MASS SPECTROMETRY [LARGE SCALE ANALYSIS]</scope>
</reference>
<reference key="7">
    <citation type="journal article" date="2015" name="Front. Plant Sci.">
        <title>Involvement of the cohesin cofactor PDS5 (SPO76) during meiosis and DNA repair in Arabidopsis thaliana.</title>
        <authorList>
            <person name="Pradillo M."/>
            <person name="Knoll A."/>
            <person name="Oliver C."/>
            <person name="Varas J."/>
            <person name="Corredor E."/>
            <person name="Puchta H."/>
            <person name="Santos J.L."/>
        </authorList>
    </citation>
    <scope>FUNCTION</scope>
    <scope>DISRUPTION PHENOTYPE</scope>
    <source>
        <strain>cv. Columbia</strain>
    </source>
</reference>
<dbReference type="EMBL" id="AL049607">
    <property type="protein sequence ID" value="CAB40758.1"/>
    <property type="status" value="ALT_SEQ"/>
    <property type="molecule type" value="Genomic_DNA"/>
</dbReference>
<dbReference type="EMBL" id="AL161579">
    <property type="protein sequence ID" value="CAB79906.1"/>
    <property type="status" value="ALT_SEQ"/>
    <property type="molecule type" value="Genomic_DNA"/>
</dbReference>
<dbReference type="EMBL" id="CP002687">
    <property type="protein sequence ID" value="AEE85972.1"/>
    <property type="molecule type" value="Genomic_DNA"/>
</dbReference>
<dbReference type="EMBL" id="AY063818">
    <property type="protein sequence ID" value="AAL36174.1"/>
    <property type="molecule type" value="mRNA"/>
</dbReference>
<dbReference type="EMBL" id="BT002315">
    <property type="protein sequence ID" value="AAN86148.1"/>
    <property type="molecule type" value="mRNA"/>
</dbReference>
<dbReference type="PIR" id="T06310">
    <property type="entry name" value="T06310"/>
</dbReference>
<dbReference type="RefSeq" id="NP_194916.2">
    <property type="nucleotide sequence ID" value="NM_119339.3"/>
</dbReference>
<dbReference type="PDB" id="7DE9">
    <property type="method" value="X-ray"/>
    <property type="resolution" value="1.71 A"/>
    <property type="chains" value="A=597-662"/>
</dbReference>
<dbReference type="PDBsum" id="7DE9"/>
<dbReference type="SMR" id="Q8GUP3"/>
<dbReference type="FunCoup" id="Q8GUP3">
    <property type="interactions" value="2164"/>
</dbReference>
<dbReference type="STRING" id="3702.Q8GUP3"/>
<dbReference type="GlyGen" id="Q8GUP3">
    <property type="glycosylation" value="1 site"/>
</dbReference>
<dbReference type="iPTMnet" id="Q8GUP3"/>
<dbReference type="PaxDb" id="3702-AT4G31880.1"/>
<dbReference type="ProteomicsDB" id="180941"/>
<dbReference type="EnsemblPlants" id="AT4G31880.1">
    <property type="protein sequence ID" value="AT4G31880.1"/>
    <property type="gene ID" value="AT4G31880"/>
</dbReference>
<dbReference type="GeneID" id="829318"/>
<dbReference type="Gramene" id="AT4G31880.1">
    <property type="protein sequence ID" value="AT4G31880.1"/>
    <property type="gene ID" value="AT4G31880"/>
</dbReference>
<dbReference type="KEGG" id="ath:AT4G31880"/>
<dbReference type="Araport" id="AT4G31880"/>
<dbReference type="TAIR" id="AT4G31880">
    <property type="gene designation" value="PDS5C"/>
</dbReference>
<dbReference type="eggNOG" id="KOG1525">
    <property type="taxonomic scope" value="Eukaryota"/>
</dbReference>
<dbReference type="InParanoid" id="Q8GUP3"/>
<dbReference type="OrthoDB" id="200660at2759"/>
<dbReference type="PhylomeDB" id="Q8GUP3"/>
<dbReference type="CD-CODE" id="4299E36E">
    <property type="entry name" value="Nucleolus"/>
</dbReference>
<dbReference type="PRO" id="PR:Q8GUP3"/>
<dbReference type="Proteomes" id="UP000006548">
    <property type="component" value="Chromosome 4"/>
</dbReference>
<dbReference type="ExpressionAtlas" id="Q8GUP3">
    <property type="expression patterns" value="baseline and differential"/>
</dbReference>
<dbReference type="GO" id="GO:0005634">
    <property type="term" value="C:nucleus"/>
    <property type="evidence" value="ECO:0007669"/>
    <property type="project" value="UniProtKB-SubCell"/>
</dbReference>
<dbReference type="GO" id="GO:0051301">
    <property type="term" value="P:cell division"/>
    <property type="evidence" value="ECO:0007669"/>
    <property type="project" value="UniProtKB-KW"/>
</dbReference>
<dbReference type="GO" id="GO:0006310">
    <property type="term" value="P:DNA recombination"/>
    <property type="evidence" value="ECO:0000315"/>
    <property type="project" value="UniProtKB"/>
</dbReference>
<dbReference type="GO" id="GO:0006281">
    <property type="term" value="P:DNA repair"/>
    <property type="evidence" value="ECO:0000315"/>
    <property type="project" value="UniProtKB"/>
</dbReference>
<dbReference type="GO" id="GO:0035825">
    <property type="term" value="P:homologous recombination"/>
    <property type="evidence" value="ECO:0000315"/>
    <property type="project" value="UniProtKB"/>
</dbReference>
<dbReference type="GO" id="GO:0009556">
    <property type="term" value="P:microsporogenesis"/>
    <property type="evidence" value="ECO:0000316"/>
    <property type="project" value="TAIR"/>
</dbReference>
<dbReference type="GO" id="GO:0007064">
    <property type="term" value="P:mitotic sister chromatid cohesion"/>
    <property type="evidence" value="ECO:0000315"/>
    <property type="project" value="UniProtKB"/>
</dbReference>
<dbReference type="CDD" id="cd20404">
    <property type="entry name" value="Tudor_Agenet_AtEML-like"/>
    <property type="match status" value="1"/>
</dbReference>
<dbReference type="FunFam" id="2.30.30.140:FF:000033">
    <property type="entry name" value="Binding protein"/>
    <property type="match status" value="1"/>
</dbReference>
<dbReference type="Gene3D" id="2.30.30.140">
    <property type="match status" value="1"/>
</dbReference>
<dbReference type="InterPro" id="IPR016024">
    <property type="entry name" value="ARM-type_fold"/>
</dbReference>
<dbReference type="InterPro" id="IPR039776">
    <property type="entry name" value="Pds5"/>
</dbReference>
<dbReference type="PANTHER" id="PTHR12663">
    <property type="entry name" value="ANDROGEN INDUCED INHIBITOR OF PROLIFERATION AS3 / PDS5-RELATED"/>
    <property type="match status" value="1"/>
</dbReference>
<dbReference type="PANTHER" id="PTHR12663:SF3">
    <property type="entry name" value="SISTER CHROMATID COHESION PROTEIN PDS5 HOMOLOG C"/>
    <property type="match status" value="1"/>
</dbReference>
<dbReference type="Pfam" id="PF20168">
    <property type="entry name" value="PDS5"/>
    <property type="match status" value="1"/>
</dbReference>
<dbReference type="SUPFAM" id="SSF48371">
    <property type="entry name" value="ARM repeat"/>
    <property type="match status" value="1"/>
</dbReference>
<dbReference type="SUPFAM" id="SSF63748">
    <property type="entry name" value="Tudor/PWWP/MBT"/>
    <property type="match status" value="1"/>
</dbReference>
<proteinExistence type="evidence at protein level"/>